<accession>C5BET0</accession>
<evidence type="ECO:0000255" key="1">
    <source>
        <dbReference type="HAMAP-Rule" id="MF_00127"/>
    </source>
</evidence>
<proteinExistence type="inferred from homology"/>
<reference key="1">
    <citation type="submission" date="2009-03" db="EMBL/GenBank/DDBJ databases">
        <title>Complete genome sequence of Edwardsiella ictaluri 93-146.</title>
        <authorList>
            <person name="Williams M.L."/>
            <person name="Gillaspy A.F."/>
            <person name="Dyer D.W."/>
            <person name="Thune R.L."/>
            <person name="Waldbieser G.C."/>
            <person name="Schuster S.C."/>
            <person name="Gipson J."/>
            <person name="Zaitshik J."/>
            <person name="Landry C."/>
            <person name="Lawrence M.L."/>
        </authorList>
    </citation>
    <scope>NUCLEOTIDE SEQUENCE [LARGE SCALE GENOMIC DNA]</scope>
    <source>
        <strain>93-146</strain>
    </source>
</reference>
<feature type="chain" id="PRO_1000203135" description="Histidine--tRNA ligase">
    <location>
        <begin position="1"/>
        <end position="424"/>
    </location>
</feature>
<sequence>MAKNIQAIRGMNDYLPADTALWQPIEAALKQVLASYGYSEIRLPIVEQTPLFKRAIGEVTDVVEKEMYTFEDRNGDSLTLRPEGTAGCVRAGIEHGLLYNQEQRLWYIGPMFRHERPQKGRYRQFHQLGAEVFGLAGPDIDAEIIMMTARWWKVLGIADHVTLELNSIGSLEARAAYRDALVAYLEQYKDQLDEDCLRRMYSNPLRVLDSKNPQVQALLNAAPRLSEYLDADSRAHFDGLCRLLDDAGIVYTVNERLVRGLDYYNRTVFEWVTTSLGAQGTVCAGGRYDGLVAQLGGHATSAVGFAMGLERLVLLVQAVNPAFLPQRAVDVYLIAAGEGTQSAAMRLAEQLRDALPTLRLMTNYGGGNFKKQFARADKWGARIALVLGESEVQSGQVNVKCLASGEQQTVAQDQAATLLATLLG</sequence>
<gene>
    <name evidence="1" type="primary">hisS</name>
    <name type="ordered locus">NT01EI_3168</name>
</gene>
<name>SYH_EDWI9</name>
<organism>
    <name type="scientific">Edwardsiella ictaluri (strain 93-146)</name>
    <dbReference type="NCBI Taxonomy" id="634503"/>
    <lineage>
        <taxon>Bacteria</taxon>
        <taxon>Pseudomonadati</taxon>
        <taxon>Pseudomonadota</taxon>
        <taxon>Gammaproteobacteria</taxon>
        <taxon>Enterobacterales</taxon>
        <taxon>Hafniaceae</taxon>
        <taxon>Edwardsiella</taxon>
    </lineage>
</organism>
<protein>
    <recommendedName>
        <fullName evidence="1">Histidine--tRNA ligase</fullName>
        <ecNumber evidence="1">6.1.1.21</ecNumber>
    </recommendedName>
    <alternativeName>
        <fullName evidence="1">Histidyl-tRNA synthetase</fullName>
        <shortName evidence="1">HisRS</shortName>
    </alternativeName>
</protein>
<comment type="catalytic activity">
    <reaction evidence="1">
        <text>tRNA(His) + L-histidine + ATP = L-histidyl-tRNA(His) + AMP + diphosphate + H(+)</text>
        <dbReference type="Rhea" id="RHEA:17313"/>
        <dbReference type="Rhea" id="RHEA-COMP:9665"/>
        <dbReference type="Rhea" id="RHEA-COMP:9689"/>
        <dbReference type="ChEBI" id="CHEBI:15378"/>
        <dbReference type="ChEBI" id="CHEBI:30616"/>
        <dbReference type="ChEBI" id="CHEBI:33019"/>
        <dbReference type="ChEBI" id="CHEBI:57595"/>
        <dbReference type="ChEBI" id="CHEBI:78442"/>
        <dbReference type="ChEBI" id="CHEBI:78527"/>
        <dbReference type="ChEBI" id="CHEBI:456215"/>
        <dbReference type="EC" id="6.1.1.21"/>
    </reaction>
</comment>
<comment type="subunit">
    <text evidence="1">Homodimer.</text>
</comment>
<comment type="subcellular location">
    <subcellularLocation>
        <location evidence="1">Cytoplasm</location>
    </subcellularLocation>
</comment>
<comment type="similarity">
    <text evidence="1">Belongs to the class-II aminoacyl-tRNA synthetase family.</text>
</comment>
<dbReference type="EC" id="6.1.1.21" evidence="1"/>
<dbReference type="EMBL" id="CP001600">
    <property type="protein sequence ID" value="ACR70318.1"/>
    <property type="molecule type" value="Genomic_DNA"/>
</dbReference>
<dbReference type="RefSeq" id="WP_015872406.1">
    <property type="nucleotide sequence ID" value="NZ_CP169062.1"/>
</dbReference>
<dbReference type="SMR" id="C5BET0"/>
<dbReference type="STRING" id="67780.B6E78_07505"/>
<dbReference type="GeneID" id="69540037"/>
<dbReference type="KEGG" id="eic:NT01EI_3168"/>
<dbReference type="PATRIC" id="fig|634503.3.peg.2829"/>
<dbReference type="HOGENOM" id="CLU_025113_1_1_6"/>
<dbReference type="OrthoDB" id="9800814at2"/>
<dbReference type="Proteomes" id="UP000001485">
    <property type="component" value="Chromosome"/>
</dbReference>
<dbReference type="GO" id="GO:0005737">
    <property type="term" value="C:cytoplasm"/>
    <property type="evidence" value="ECO:0007669"/>
    <property type="project" value="UniProtKB-SubCell"/>
</dbReference>
<dbReference type="GO" id="GO:0005524">
    <property type="term" value="F:ATP binding"/>
    <property type="evidence" value="ECO:0007669"/>
    <property type="project" value="UniProtKB-UniRule"/>
</dbReference>
<dbReference type="GO" id="GO:0004821">
    <property type="term" value="F:histidine-tRNA ligase activity"/>
    <property type="evidence" value="ECO:0007669"/>
    <property type="project" value="UniProtKB-UniRule"/>
</dbReference>
<dbReference type="GO" id="GO:0006427">
    <property type="term" value="P:histidyl-tRNA aminoacylation"/>
    <property type="evidence" value="ECO:0007669"/>
    <property type="project" value="UniProtKB-UniRule"/>
</dbReference>
<dbReference type="CDD" id="cd00773">
    <property type="entry name" value="HisRS-like_core"/>
    <property type="match status" value="1"/>
</dbReference>
<dbReference type="CDD" id="cd00859">
    <property type="entry name" value="HisRS_anticodon"/>
    <property type="match status" value="1"/>
</dbReference>
<dbReference type="FunFam" id="3.30.930.10:FF:000005">
    <property type="entry name" value="Histidine--tRNA ligase"/>
    <property type="match status" value="1"/>
</dbReference>
<dbReference type="FunFam" id="3.40.50.800:FF:000007">
    <property type="entry name" value="Histidine--tRNA ligase"/>
    <property type="match status" value="1"/>
</dbReference>
<dbReference type="Gene3D" id="3.40.50.800">
    <property type="entry name" value="Anticodon-binding domain"/>
    <property type="match status" value="1"/>
</dbReference>
<dbReference type="Gene3D" id="3.30.930.10">
    <property type="entry name" value="Bira Bifunctional Protein, Domain 2"/>
    <property type="match status" value="1"/>
</dbReference>
<dbReference type="HAMAP" id="MF_00127">
    <property type="entry name" value="His_tRNA_synth"/>
    <property type="match status" value="1"/>
</dbReference>
<dbReference type="InterPro" id="IPR006195">
    <property type="entry name" value="aa-tRNA-synth_II"/>
</dbReference>
<dbReference type="InterPro" id="IPR045864">
    <property type="entry name" value="aa-tRNA-synth_II/BPL/LPL"/>
</dbReference>
<dbReference type="InterPro" id="IPR004154">
    <property type="entry name" value="Anticodon-bd"/>
</dbReference>
<dbReference type="InterPro" id="IPR036621">
    <property type="entry name" value="Anticodon-bd_dom_sf"/>
</dbReference>
<dbReference type="InterPro" id="IPR015807">
    <property type="entry name" value="His-tRNA-ligase"/>
</dbReference>
<dbReference type="InterPro" id="IPR041715">
    <property type="entry name" value="HisRS-like_core"/>
</dbReference>
<dbReference type="InterPro" id="IPR004516">
    <property type="entry name" value="HisRS/HisZ"/>
</dbReference>
<dbReference type="InterPro" id="IPR033656">
    <property type="entry name" value="HisRS_anticodon"/>
</dbReference>
<dbReference type="NCBIfam" id="TIGR00442">
    <property type="entry name" value="hisS"/>
    <property type="match status" value="1"/>
</dbReference>
<dbReference type="PANTHER" id="PTHR43707:SF1">
    <property type="entry name" value="HISTIDINE--TRNA LIGASE, MITOCHONDRIAL-RELATED"/>
    <property type="match status" value="1"/>
</dbReference>
<dbReference type="PANTHER" id="PTHR43707">
    <property type="entry name" value="HISTIDYL-TRNA SYNTHETASE"/>
    <property type="match status" value="1"/>
</dbReference>
<dbReference type="Pfam" id="PF03129">
    <property type="entry name" value="HGTP_anticodon"/>
    <property type="match status" value="1"/>
</dbReference>
<dbReference type="Pfam" id="PF13393">
    <property type="entry name" value="tRNA-synt_His"/>
    <property type="match status" value="1"/>
</dbReference>
<dbReference type="PIRSF" id="PIRSF001549">
    <property type="entry name" value="His-tRNA_synth"/>
    <property type="match status" value="1"/>
</dbReference>
<dbReference type="SUPFAM" id="SSF52954">
    <property type="entry name" value="Class II aaRS ABD-related"/>
    <property type="match status" value="1"/>
</dbReference>
<dbReference type="SUPFAM" id="SSF55681">
    <property type="entry name" value="Class II aaRS and biotin synthetases"/>
    <property type="match status" value="1"/>
</dbReference>
<dbReference type="PROSITE" id="PS50862">
    <property type="entry name" value="AA_TRNA_LIGASE_II"/>
    <property type="match status" value="1"/>
</dbReference>
<keyword id="KW-0030">Aminoacyl-tRNA synthetase</keyword>
<keyword id="KW-0067">ATP-binding</keyword>
<keyword id="KW-0963">Cytoplasm</keyword>
<keyword id="KW-0436">Ligase</keyword>
<keyword id="KW-0547">Nucleotide-binding</keyword>
<keyword id="KW-0648">Protein biosynthesis</keyword>